<reference key="1">
    <citation type="journal article" date="2008" name="Antimicrob. Agents Chemother.">
        <title>Mutated response regulator graR is responsible for phenotypic conversion of Staphylococcus aureus from heterogeneous vancomycin-intermediate resistance to vancomycin-intermediate resistance.</title>
        <authorList>
            <person name="Neoh H.-M."/>
            <person name="Cui L."/>
            <person name="Yuzawa H."/>
            <person name="Takeuchi F."/>
            <person name="Matsuo M."/>
            <person name="Hiramatsu K."/>
        </authorList>
    </citation>
    <scope>NUCLEOTIDE SEQUENCE [LARGE SCALE GENOMIC DNA]</scope>
    <source>
        <strain>Mu3 / ATCC 700698</strain>
    </source>
</reference>
<accession>A7X3E5</accession>
<name>THII_STAA1</name>
<sequence length="407" mass="46228">MKYDHLLVRYGELTLKGSNRKKFVNQLRNNVNKSLKGLDGFVVKGKRDRMYIELEDHADINEITYRLSKIFGIKSISPVLKVEKTIEAMSAAAIKFAQQFEENSTFKIDVKRADKNFPMDTYELQRELGGTVLKQIENVSVNVKRPDHEIRVEVRLDAIYMYEEVVPGSGGLPVGTGGKTLLMLSGGIDSPVAGMEVMRRGVTIEAIHFHSPPFTSDQAKEKVIELTRILAERVGPIKLHIVPFTELQKQVNKVVHPRYTMTSTRRMMMRVADKLVHQIGALAIVNGENLGQVASQTLHSMYAINNVTSTPVLRPLLTYDKEEIIIKSKEIGTFETSIQPFEDCCTIFTPKNPVTEPNFEKVVQYESVFDFEEMINRAVENIETLEITSDYKTIKEQQTNQLINDFL</sequence>
<evidence type="ECO:0000255" key="1">
    <source>
        <dbReference type="HAMAP-Rule" id="MF_00021"/>
    </source>
</evidence>
<comment type="function">
    <text evidence="1">Catalyzes the ATP-dependent transfer of a sulfur to tRNA to produce 4-thiouridine in position 8 of tRNAs, which functions as a near-UV photosensor. Also catalyzes the transfer of sulfur to the sulfur carrier protein ThiS, forming ThiS-thiocarboxylate. This is a step in the synthesis of thiazole, in the thiamine biosynthesis pathway. The sulfur is donated as persulfide by IscS.</text>
</comment>
<comment type="catalytic activity">
    <reaction evidence="1">
        <text>[ThiI sulfur-carrier protein]-S-sulfanyl-L-cysteine + a uridine in tRNA + 2 reduced [2Fe-2S]-[ferredoxin] + ATP + H(+) = [ThiI sulfur-carrier protein]-L-cysteine + a 4-thiouridine in tRNA + 2 oxidized [2Fe-2S]-[ferredoxin] + AMP + diphosphate</text>
        <dbReference type="Rhea" id="RHEA:24176"/>
        <dbReference type="Rhea" id="RHEA-COMP:10000"/>
        <dbReference type="Rhea" id="RHEA-COMP:10001"/>
        <dbReference type="Rhea" id="RHEA-COMP:13337"/>
        <dbReference type="Rhea" id="RHEA-COMP:13338"/>
        <dbReference type="Rhea" id="RHEA-COMP:13339"/>
        <dbReference type="Rhea" id="RHEA-COMP:13340"/>
        <dbReference type="ChEBI" id="CHEBI:15378"/>
        <dbReference type="ChEBI" id="CHEBI:29950"/>
        <dbReference type="ChEBI" id="CHEBI:30616"/>
        <dbReference type="ChEBI" id="CHEBI:33019"/>
        <dbReference type="ChEBI" id="CHEBI:33737"/>
        <dbReference type="ChEBI" id="CHEBI:33738"/>
        <dbReference type="ChEBI" id="CHEBI:61963"/>
        <dbReference type="ChEBI" id="CHEBI:65315"/>
        <dbReference type="ChEBI" id="CHEBI:136798"/>
        <dbReference type="ChEBI" id="CHEBI:456215"/>
        <dbReference type="EC" id="2.8.1.4"/>
    </reaction>
</comment>
<comment type="catalytic activity">
    <reaction evidence="1">
        <text>[ThiS sulfur-carrier protein]-C-terminal Gly-Gly-AMP + S-sulfanyl-L-cysteinyl-[cysteine desulfurase] + AH2 = [ThiS sulfur-carrier protein]-C-terminal-Gly-aminoethanethioate + L-cysteinyl-[cysteine desulfurase] + A + AMP + 2 H(+)</text>
        <dbReference type="Rhea" id="RHEA:43340"/>
        <dbReference type="Rhea" id="RHEA-COMP:12157"/>
        <dbReference type="Rhea" id="RHEA-COMP:12158"/>
        <dbReference type="Rhea" id="RHEA-COMP:12910"/>
        <dbReference type="Rhea" id="RHEA-COMP:19908"/>
        <dbReference type="ChEBI" id="CHEBI:13193"/>
        <dbReference type="ChEBI" id="CHEBI:15378"/>
        <dbReference type="ChEBI" id="CHEBI:17499"/>
        <dbReference type="ChEBI" id="CHEBI:29950"/>
        <dbReference type="ChEBI" id="CHEBI:61963"/>
        <dbReference type="ChEBI" id="CHEBI:90618"/>
        <dbReference type="ChEBI" id="CHEBI:232372"/>
        <dbReference type="ChEBI" id="CHEBI:456215"/>
    </reaction>
</comment>
<comment type="pathway">
    <text evidence="1">Cofactor biosynthesis; thiamine diphosphate biosynthesis.</text>
</comment>
<comment type="subcellular location">
    <subcellularLocation>
        <location evidence="1">Cytoplasm</location>
    </subcellularLocation>
</comment>
<comment type="similarity">
    <text evidence="1">Belongs to the ThiI family.</text>
</comment>
<keyword id="KW-0067">ATP-binding</keyword>
<keyword id="KW-0963">Cytoplasm</keyword>
<keyword id="KW-0547">Nucleotide-binding</keyword>
<keyword id="KW-0694">RNA-binding</keyword>
<keyword id="KW-0784">Thiamine biosynthesis</keyword>
<keyword id="KW-0808">Transferase</keyword>
<keyword id="KW-0820">tRNA-binding</keyword>
<protein>
    <recommendedName>
        <fullName evidence="1">Probable tRNA sulfurtransferase</fullName>
        <ecNumber evidence="1">2.8.1.4</ecNumber>
    </recommendedName>
    <alternativeName>
        <fullName evidence="1">Sulfur carrier protein ThiS sulfurtransferase</fullName>
    </alternativeName>
    <alternativeName>
        <fullName evidence="1">Thiamine biosynthesis protein ThiI</fullName>
    </alternativeName>
    <alternativeName>
        <fullName evidence="1">tRNA 4-thiouridine synthase</fullName>
    </alternativeName>
</protein>
<proteinExistence type="inferred from homology"/>
<organism>
    <name type="scientific">Staphylococcus aureus (strain Mu3 / ATCC 700698)</name>
    <dbReference type="NCBI Taxonomy" id="418127"/>
    <lineage>
        <taxon>Bacteria</taxon>
        <taxon>Bacillati</taxon>
        <taxon>Bacillota</taxon>
        <taxon>Bacilli</taxon>
        <taxon>Bacillales</taxon>
        <taxon>Staphylococcaceae</taxon>
        <taxon>Staphylococcus</taxon>
    </lineage>
</organism>
<gene>
    <name evidence="1" type="primary">thiI</name>
    <name type="ordered locus">SAHV_1701</name>
</gene>
<dbReference type="EC" id="2.8.1.4" evidence="1"/>
<dbReference type="EMBL" id="AP009324">
    <property type="protein sequence ID" value="BAF78584.1"/>
    <property type="molecule type" value="Genomic_DNA"/>
</dbReference>
<dbReference type="RefSeq" id="WP_000872662.1">
    <property type="nucleotide sequence ID" value="NC_009782.1"/>
</dbReference>
<dbReference type="SMR" id="A7X3E5"/>
<dbReference type="KEGG" id="saw:SAHV_1701"/>
<dbReference type="HOGENOM" id="CLU_037952_4_0_9"/>
<dbReference type="UniPathway" id="UPA00060"/>
<dbReference type="GO" id="GO:0005829">
    <property type="term" value="C:cytosol"/>
    <property type="evidence" value="ECO:0007669"/>
    <property type="project" value="TreeGrafter"/>
</dbReference>
<dbReference type="GO" id="GO:0005524">
    <property type="term" value="F:ATP binding"/>
    <property type="evidence" value="ECO:0007669"/>
    <property type="project" value="UniProtKB-UniRule"/>
</dbReference>
<dbReference type="GO" id="GO:0004810">
    <property type="term" value="F:CCA tRNA nucleotidyltransferase activity"/>
    <property type="evidence" value="ECO:0007669"/>
    <property type="project" value="InterPro"/>
</dbReference>
<dbReference type="GO" id="GO:0000049">
    <property type="term" value="F:tRNA binding"/>
    <property type="evidence" value="ECO:0007669"/>
    <property type="project" value="UniProtKB-UniRule"/>
</dbReference>
<dbReference type="GO" id="GO:0140741">
    <property type="term" value="F:tRNA-uracil-4 sulfurtransferase activity"/>
    <property type="evidence" value="ECO:0007669"/>
    <property type="project" value="UniProtKB-EC"/>
</dbReference>
<dbReference type="GO" id="GO:0009228">
    <property type="term" value="P:thiamine biosynthetic process"/>
    <property type="evidence" value="ECO:0007669"/>
    <property type="project" value="UniProtKB-KW"/>
</dbReference>
<dbReference type="GO" id="GO:0009229">
    <property type="term" value="P:thiamine diphosphate biosynthetic process"/>
    <property type="evidence" value="ECO:0007669"/>
    <property type="project" value="UniProtKB-UniRule"/>
</dbReference>
<dbReference type="GO" id="GO:0052837">
    <property type="term" value="P:thiazole biosynthetic process"/>
    <property type="evidence" value="ECO:0007669"/>
    <property type="project" value="TreeGrafter"/>
</dbReference>
<dbReference type="GO" id="GO:0002937">
    <property type="term" value="P:tRNA 4-thiouridine biosynthesis"/>
    <property type="evidence" value="ECO:0007669"/>
    <property type="project" value="TreeGrafter"/>
</dbReference>
<dbReference type="CDD" id="cd01712">
    <property type="entry name" value="PPase_ThiI"/>
    <property type="match status" value="1"/>
</dbReference>
<dbReference type="CDD" id="cd11716">
    <property type="entry name" value="THUMP_ThiI"/>
    <property type="match status" value="1"/>
</dbReference>
<dbReference type="FunFam" id="3.30.2130.30:FF:000009">
    <property type="entry name" value="Probable tRNA sulfurtransferase"/>
    <property type="match status" value="1"/>
</dbReference>
<dbReference type="FunFam" id="3.40.50.620:FF:000053">
    <property type="entry name" value="Probable tRNA sulfurtransferase"/>
    <property type="match status" value="1"/>
</dbReference>
<dbReference type="Gene3D" id="3.30.2130.30">
    <property type="match status" value="1"/>
</dbReference>
<dbReference type="Gene3D" id="3.40.50.620">
    <property type="entry name" value="HUPs"/>
    <property type="match status" value="1"/>
</dbReference>
<dbReference type="HAMAP" id="MF_00021">
    <property type="entry name" value="ThiI"/>
    <property type="match status" value="1"/>
</dbReference>
<dbReference type="InterPro" id="IPR014729">
    <property type="entry name" value="Rossmann-like_a/b/a_fold"/>
</dbReference>
<dbReference type="InterPro" id="IPR020536">
    <property type="entry name" value="ThiI_AANH"/>
</dbReference>
<dbReference type="InterPro" id="IPR054173">
    <property type="entry name" value="ThiI_fer"/>
</dbReference>
<dbReference type="InterPro" id="IPR049961">
    <property type="entry name" value="ThiI_N"/>
</dbReference>
<dbReference type="InterPro" id="IPR004114">
    <property type="entry name" value="THUMP_dom"/>
</dbReference>
<dbReference type="InterPro" id="IPR049962">
    <property type="entry name" value="THUMP_ThiI"/>
</dbReference>
<dbReference type="InterPro" id="IPR003720">
    <property type="entry name" value="tRNA_STrfase"/>
</dbReference>
<dbReference type="InterPro" id="IPR050102">
    <property type="entry name" value="tRNA_sulfurtransferase_ThiI"/>
</dbReference>
<dbReference type="NCBIfam" id="TIGR00342">
    <property type="entry name" value="tRNA uracil 4-sulfurtransferase ThiI"/>
    <property type="match status" value="1"/>
</dbReference>
<dbReference type="PANTHER" id="PTHR43209">
    <property type="entry name" value="TRNA SULFURTRANSFERASE"/>
    <property type="match status" value="1"/>
</dbReference>
<dbReference type="PANTHER" id="PTHR43209:SF1">
    <property type="entry name" value="TRNA SULFURTRANSFERASE"/>
    <property type="match status" value="1"/>
</dbReference>
<dbReference type="Pfam" id="PF02568">
    <property type="entry name" value="ThiI"/>
    <property type="match status" value="1"/>
</dbReference>
<dbReference type="Pfam" id="PF22025">
    <property type="entry name" value="ThiI_fer"/>
    <property type="match status" value="1"/>
</dbReference>
<dbReference type="Pfam" id="PF02926">
    <property type="entry name" value="THUMP"/>
    <property type="match status" value="1"/>
</dbReference>
<dbReference type="SMART" id="SM00981">
    <property type="entry name" value="THUMP"/>
    <property type="match status" value="1"/>
</dbReference>
<dbReference type="SUPFAM" id="SSF52402">
    <property type="entry name" value="Adenine nucleotide alpha hydrolases-like"/>
    <property type="match status" value="1"/>
</dbReference>
<dbReference type="SUPFAM" id="SSF143437">
    <property type="entry name" value="THUMP domain-like"/>
    <property type="match status" value="1"/>
</dbReference>
<dbReference type="PROSITE" id="PS51165">
    <property type="entry name" value="THUMP"/>
    <property type="match status" value="1"/>
</dbReference>
<feature type="chain" id="PRO_1000074282" description="Probable tRNA sulfurtransferase">
    <location>
        <begin position="1"/>
        <end position="407"/>
    </location>
</feature>
<feature type="domain" description="THUMP" evidence="1">
    <location>
        <begin position="61"/>
        <end position="165"/>
    </location>
</feature>
<feature type="binding site" evidence="1">
    <location>
        <begin position="183"/>
        <end position="184"/>
    </location>
    <ligand>
        <name>ATP</name>
        <dbReference type="ChEBI" id="CHEBI:30616"/>
    </ligand>
</feature>
<feature type="binding site" evidence="1">
    <location>
        <begin position="208"/>
        <end position="209"/>
    </location>
    <ligand>
        <name>ATP</name>
        <dbReference type="ChEBI" id="CHEBI:30616"/>
    </ligand>
</feature>
<feature type="binding site" evidence="1">
    <location>
        <position position="265"/>
    </location>
    <ligand>
        <name>ATP</name>
        <dbReference type="ChEBI" id="CHEBI:30616"/>
    </ligand>
</feature>
<feature type="binding site" evidence="1">
    <location>
        <position position="287"/>
    </location>
    <ligand>
        <name>ATP</name>
        <dbReference type="ChEBI" id="CHEBI:30616"/>
    </ligand>
</feature>
<feature type="binding site" evidence="1">
    <location>
        <position position="296"/>
    </location>
    <ligand>
        <name>ATP</name>
        <dbReference type="ChEBI" id="CHEBI:30616"/>
    </ligand>
</feature>